<feature type="chain" id="PRO_0000171388" description="tRNA (guanine-N(7)-)-methyltransferase">
    <location>
        <begin position="1"/>
        <end position="214"/>
    </location>
</feature>
<feature type="active site" evidence="1">
    <location>
        <position position="117"/>
    </location>
</feature>
<feature type="binding site" evidence="2">
    <location>
        <position position="43"/>
    </location>
    <ligand>
        <name>S-adenosyl-L-methionine</name>
        <dbReference type="ChEBI" id="CHEBI:59789"/>
    </ligand>
</feature>
<feature type="binding site" evidence="2">
    <location>
        <position position="68"/>
    </location>
    <ligand>
        <name>S-adenosyl-L-methionine</name>
        <dbReference type="ChEBI" id="CHEBI:59789"/>
    </ligand>
</feature>
<feature type="binding site" evidence="2">
    <location>
        <position position="95"/>
    </location>
    <ligand>
        <name>S-adenosyl-L-methionine</name>
        <dbReference type="ChEBI" id="CHEBI:59789"/>
    </ligand>
</feature>
<feature type="binding site" evidence="2">
    <location>
        <position position="117"/>
    </location>
    <ligand>
        <name>S-adenosyl-L-methionine</name>
        <dbReference type="ChEBI" id="CHEBI:59789"/>
    </ligand>
</feature>
<feature type="binding site" evidence="2">
    <location>
        <position position="121"/>
    </location>
    <ligand>
        <name>substrate</name>
    </ligand>
</feature>
<feature type="binding site" evidence="2">
    <location>
        <position position="153"/>
    </location>
    <ligand>
        <name>substrate</name>
    </ligand>
</feature>
<feature type="binding site" evidence="2">
    <location>
        <begin position="190"/>
        <end position="193"/>
    </location>
    <ligand>
        <name>substrate</name>
    </ligand>
</feature>
<keyword id="KW-0489">Methyltransferase</keyword>
<keyword id="KW-0949">S-adenosyl-L-methionine</keyword>
<keyword id="KW-0808">Transferase</keyword>
<keyword id="KW-0819">tRNA processing</keyword>
<accession>Q9KWZ4</accession>
<comment type="function">
    <text evidence="2">Catalyzes the formation of N(7)-methylguanine at position 46 (m7G46) in tRNA.</text>
</comment>
<comment type="catalytic activity">
    <reaction evidence="2">
        <text>guanosine(46) in tRNA + S-adenosyl-L-methionine = N(7)-methylguanosine(46) in tRNA + S-adenosyl-L-homocysteine</text>
        <dbReference type="Rhea" id="RHEA:42708"/>
        <dbReference type="Rhea" id="RHEA-COMP:10188"/>
        <dbReference type="Rhea" id="RHEA-COMP:10189"/>
        <dbReference type="ChEBI" id="CHEBI:57856"/>
        <dbReference type="ChEBI" id="CHEBI:59789"/>
        <dbReference type="ChEBI" id="CHEBI:74269"/>
        <dbReference type="ChEBI" id="CHEBI:74480"/>
        <dbReference type="EC" id="2.1.1.33"/>
    </reaction>
</comment>
<comment type="pathway">
    <text evidence="2">tRNA modification; N(7)-methylguanine-tRNA biosynthesis.</text>
</comment>
<comment type="similarity">
    <text evidence="2">Belongs to the class I-like SAM-binding methyltransferase superfamily. TrmB family.</text>
</comment>
<protein>
    <recommendedName>
        <fullName evidence="2">tRNA (guanine-N(7)-)-methyltransferase</fullName>
        <ecNumber evidence="2">2.1.1.33</ecNumber>
    </recommendedName>
    <alternativeName>
        <fullName evidence="2">tRNA (guanine(46)-N(7))-methyltransferase</fullName>
    </alternativeName>
    <alternativeName>
        <fullName evidence="2">tRNA(m7G46)-methyltransferase</fullName>
    </alternativeName>
</protein>
<reference key="1">
    <citation type="journal article" date="1999" name="Microb. Drug Resist.">
        <title>Antibiotic resistance as a stress response: complete sequencing of a large number of chromosomal loci in Staphylococcus aureus strain COL that impact on the expression of resistance to methicillin.</title>
        <authorList>
            <person name="de Lencastre H."/>
            <person name="Wu S.-W."/>
            <person name="Pinho M.G."/>
            <person name="Ludovice A.M."/>
            <person name="Filipe S."/>
            <person name="Gardete S."/>
            <person name="Sobral R."/>
            <person name="Gill S.R."/>
            <person name="Chung M."/>
            <person name="Tomasz A."/>
        </authorList>
    </citation>
    <scope>NUCLEOTIDE SEQUENCE [GENOMIC DNA]</scope>
</reference>
<reference key="2">
    <citation type="journal article" date="2005" name="J. Bacteriol.">
        <title>Insights on evolution of virulence and resistance from the complete genome analysis of an early methicillin-resistant Staphylococcus aureus strain and a biofilm-producing methicillin-resistant Staphylococcus epidermidis strain.</title>
        <authorList>
            <person name="Gill S.R."/>
            <person name="Fouts D.E."/>
            <person name="Archer G.L."/>
            <person name="Mongodin E.F."/>
            <person name="DeBoy R.T."/>
            <person name="Ravel J."/>
            <person name="Paulsen I.T."/>
            <person name="Kolonay J.F."/>
            <person name="Brinkac L.M."/>
            <person name="Beanan M.J."/>
            <person name="Dodson R.J."/>
            <person name="Daugherty S.C."/>
            <person name="Madupu R."/>
            <person name="Angiuoli S.V."/>
            <person name="Durkin A.S."/>
            <person name="Haft D.H."/>
            <person name="Vamathevan J.J."/>
            <person name="Khouri H."/>
            <person name="Utterback T.R."/>
            <person name="Lee C."/>
            <person name="Dimitrov G."/>
            <person name="Jiang L."/>
            <person name="Qin H."/>
            <person name="Weidman J."/>
            <person name="Tran K."/>
            <person name="Kang K.H."/>
            <person name="Hance I.R."/>
            <person name="Nelson K.E."/>
            <person name="Fraser C.M."/>
        </authorList>
    </citation>
    <scope>NUCLEOTIDE SEQUENCE [LARGE SCALE GENOMIC DNA]</scope>
    <source>
        <strain>COL</strain>
    </source>
</reference>
<dbReference type="EC" id="2.1.1.33" evidence="2"/>
<dbReference type="EMBL" id="Y14816">
    <property type="protein sequence ID" value="CAB82477.1"/>
    <property type="molecule type" value="Genomic_DNA"/>
</dbReference>
<dbReference type="EMBL" id="CP000046">
    <property type="protein sequence ID" value="AAW38326.1"/>
    <property type="molecule type" value="Genomic_DNA"/>
</dbReference>
<dbReference type="RefSeq" id="WP_001266167.1">
    <property type="nucleotide sequence ID" value="NZ_JBGOFO010000008.1"/>
</dbReference>
<dbReference type="SMR" id="Q9KWZ4"/>
<dbReference type="KEGG" id="sac:SACOL1798"/>
<dbReference type="HOGENOM" id="CLU_050910_2_1_9"/>
<dbReference type="UniPathway" id="UPA00989"/>
<dbReference type="Proteomes" id="UP000000530">
    <property type="component" value="Chromosome"/>
</dbReference>
<dbReference type="GO" id="GO:0043527">
    <property type="term" value="C:tRNA methyltransferase complex"/>
    <property type="evidence" value="ECO:0007669"/>
    <property type="project" value="TreeGrafter"/>
</dbReference>
<dbReference type="GO" id="GO:0008176">
    <property type="term" value="F:tRNA (guanine(46)-N7)-methyltransferase activity"/>
    <property type="evidence" value="ECO:0007669"/>
    <property type="project" value="UniProtKB-UniRule"/>
</dbReference>
<dbReference type="CDD" id="cd02440">
    <property type="entry name" value="AdoMet_MTases"/>
    <property type="match status" value="1"/>
</dbReference>
<dbReference type="FunFam" id="3.40.50.150:FF:000035">
    <property type="entry name" value="tRNA (guanine-N(7)-)-methyltransferase"/>
    <property type="match status" value="1"/>
</dbReference>
<dbReference type="Gene3D" id="3.40.50.150">
    <property type="entry name" value="Vaccinia Virus protein VP39"/>
    <property type="match status" value="1"/>
</dbReference>
<dbReference type="HAMAP" id="MF_01057">
    <property type="entry name" value="tRNA_methyltr_TrmB"/>
    <property type="match status" value="1"/>
</dbReference>
<dbReference type="InterPro" id="IPR029063">
    <property type="entry name" value="SAM-dependent_MTases_sf"/>
</dbReference>
<dbReference type="InterPro" id="IPR003358">
    <property type="entry name" value="tRNA_(Gua-N-7)_MeTrfase_Trmb"/>
</dbReference>
<dbReference type="InterPro" id="IPR055361">
    <property type="entry name" value="tRNA_methyltr_TrmB_bact"/>
</dbReference>
<dbReference type="NCBIfam" id="NF001080">
    <property type="entry name" value="PRK00121.2-2"/>
    <property type="match status" value="1"/>
</dbReference>
<dbReference type="NCBIfam" id="TIGR00091">
    <property type="entry name" value="tRNA (guanosine(46)-N7)-methyltransferase TrmB"/>
    <property type="match status" value="1"/>
</dbReference>
<dbReference type="PANTHER" id="PTHR23417">
    <property type="entry name" value="3-DEOXY-D-MANNO-OCTULOSONIC-ACID TRANSFERASE/TRNA GUANINE-N 7 - -METHYLTRANSFERASE"/>
    <property type="match status" value="1"/>
</dbReference>
<dbReference type="PANTHER" id="PTHR23417:SF14">
    <property type="entry name" value="PENTACOTRIPEPTIDE-REPEAT REGION OF PRORP DOMAIN-CONTAINING PROTEIN"/>
    <property type="match status" value="1"/>
</dbReference>
<dbReference type="Pfam" id="PF02390">
    <property type="entry name" value="Methyltransf_4"/>
    <property type="match status" value="1"/>
</dbReference>
<dbReference type="SUPFAM" id="SSF53335">
    <property type="entry name" value="S-adenosyl-L-methionine-dependent methyltransferases"/>
    <property type="match status" value="1"/>
</dbReference>
<dbReference type="PROSITE" id="PS51625">
    <property type="entry name" value="SAM_MT_TRMB"/>
    <property type="match status" value="1"/>
</dbReference>
<proteinExistence type="inferred from homology"/>
<name>TRMB_STAAC</name>
<sequence length="214" mass="25275">MRVRYKPWAKDYLKDHPELVDMDGQHAGKMTEWFDKTQPIHIEIGSGMGQFITTLAAQNPHINYISMEREKSIVYKVLDKVKEMGLTNLKIICNDAIELNEYFKDGEVSRIYLNFSDPWPKNRHAKRRLTYHTFLALYQQILNDEGDLHFKTDNRGLFAYSLESMSQFGMYFTKINLNLHQEDDGSNILTEYEKKFSDKGSRIYRMEAKFHSQK</sequence>
<evidence type="ECO:0000250" key="1"/>
<evidence type="ECO:0000255" key="2">
    <source>
        <dbReference type="HAMAP-Rule" id="MF_01057"/>
    </source>
</evidence>
<organism>
    <name type="scientific">Staphylococcus aureus (strain COL)</name>
    <dbReference type="NCBI Taxonomy" id="93062"/>
    <lineage>
        <taxon>Bacteria</taxon>
        <taxon>Bacillati</taxon>
        <taxon>Bacillota</taxon>
        <taxon>Bacilli</taxon>
        <taxon>Bacillales</taxon>
        <taxon>Staphylococcaceae</taxon>
        <taxon>Staphylococcus</taxon>
    </lineage>
</organism>
<gene>
    <name evidence="2" type="primary">trmB</name>
    <name type="ordered locus">SACOL1798</name>
</gene>